<comment type="function">
    <text evidence="1">Catalyzes the transfer of the diacylglyceryl group from phosphatidylglycerol to the sulfhydryl group of the N-terminal cysteine of a prolipoprotein, the first step in the formation of mature lipoproteins.</text>
</comment>
<comment type="catalytic activity">
    <reaction evidence="1">
        <text>L-cysteinyl-[prolipoprotein] + a 1,2-diacyl-sn-glycero-3-phospho-(1'-sn-glycerol) = an S-1,2-diacyl-sn-glyceryl-L-cysteinyl-[prolipoprotein] + sn-glycerol 1-phosphate + H(+)</text>
        <dbReference type="Rhea" id="RHEA:56712"/>
        <dbReference type="Rhea" id="RHEA-COMP:14679"/>
        <dbReference type="Rhea" id="RHEA-COMP:14680"/>
        <dbReference type="ChEBI" id="CHEBI:15378"/>
        <dbReference type="ChEBI" id="CHEBI:29950"/>
        <dbReference type="ChEBI" id="CHEBI:57685"/>
        <dbReference type="ChEBI" id="CHEBI:64716"/>
        <dbReference type="ChEBI" id="CHEBI:140658"/>
        <dbReference type="EC" id="2.5.1.145"/>
    </reaction>
</comment>
<comment type="pathway">
    <text evidence="1">Protein modification; lipoprotein biosynthesis (diacylglyceryl transfer).</text>
</comment>
<comment type="subcellular location">
    <subcellularLocation>
        <location evidence="1">Cell inner membrane</location>
        <topology evidence="1">Multi-pass membrane protein</topology>
    </subcellularLocation>
</comment>
<comment type="similarity">
    <text evidence="1">Belongs to the Lgt family.</text>
</comment>
<organism>
    <name type="scientific">Nitrosospira multiformis (strain ATCC 25196 / NCIMB 11849 / C 71)</name>
    <dbReference type="NCBI Taxonomy" id="323848"/>
    <lineage>
        <taxon>Bacteria</taxon>
        <taxon>Pseudomonadati</taxon>
        <taxon>Pseudomonadota</taxon>
        <taxon>Betaproteobacteria</taxon>
        <taxon>Nitrosomonadales</taxon>
        <taxon>Nitrosomonadaceae</taxon>
        <taxon>Nitrosospira</taxon>
    </lineage>
</organism>
<sequence length="289" mass="32172">MLVHPQIDPIAIQLGPLAVRWYGLMYLLGFACFILLGRYRIKRNPEGAFTISMLDDMLFYGVLGVIVGGRLGHIFFYQFGYYLEHPLEIFAVWQGGMSFHGGFLGVIAAMALLARKYHLRWLVVTDFIAPLVPLGLGAGRIGNFINAELWGRPTDVPWGMIFPYVDNIPRHPSQLYEFALEGLAFFTLMWIYSARPRPVGAVSGMFLIGYGVFRSFAEFFREPDEGFMGMMTLGISMGQWLSLPMILAGVIMLVWAYRTQAPVSARGKAGKAGKAANAVVAGKRGSKER</sequence>
<protein>
    <recommendedName>
        <fullName evidence="1">Phosphatidylglycerol--prolipoprotein diacylglyceryl transferase</fullName>
        <ecNumber evidence="1">2.5.1.145</ecNumber>
    </recommendedName>
</protein>
<name>LGT_NITMU</name>
<reference key="1">
    <citation type="submission" date="2005-08" db="EMBL/GenBank/DDBJ databases">
        <title>Complete sequence of chromosome 1 of Nitrosospira multiformis ATCC 25196.</title>
        <authorList>
            <person name="Copeland A."/>
            <person name="Lucas S."/>
            <person name="Lapidus A."/>
            <person name="Barry K."/>
            <person name="Detter J.C."/>
            <person name="Glavina T."/>
            <person name="Hammon N."/>
            <person name="Israni S."/>
            <person name="Pitluck S."/>
            <person name="Chain P."/>
            <person name="Malfatti S."/>
            <person name="Shin M."/>
            <person name="Vergez L."/>
            <person name="Schmutz J."/>
            <person name="Larimer F."/>
            <person name="Land M."/>
            <person name="Hauser L."/>
            <person name="Kyrpides N."/>
            <person name="Lykidis A."/>
            <person name="Richardson P."/>
        </authorList>
    </citation>
    <scope>NUCLEOTIDE SEQUENCE [LARGE SCALE GENOMIC DNA]</scope>
    <source>
        <strain>ATCC 25196 / NCIMB 11849 / C 71</strain>
    </source>
</reference>
<gene>
    <name evidence="1" type="primary">lgt</name>
    <name type="ordered locus">Nmul_A0348</name>
</gene>
<dbReference type="EC" id="2.5.1.145" evidence="1"/>
<dbReference type="EMBL" id="CP000103">
    <property type="protein sequence ID" value="ABB73656.1"/>
    <property type="molecule type" value="Genomic_DNA"/>
</dbReference>
<dbReference type="RefSeq" id="WP_011379710.1">
    <property type="nucleotide sequence ID" value="NC_007614.1"/>
</dbReference>
<dbReference type="SMR" id="Q2YC65"/>
<dbReference type="STRING" id="323848.Nmul_A0348"/>
<dbReference type="KEGG" id="nmu:Nmul_A0348"/>
<dbReference type="eggNOG" id="COG0682">
    <property type="taxonomic scope" value="Bacteria"/>
</dbReference>
<dbReference type="HOGENOM" id="CLU_013386_1_0_4"/>
<dbReference type="OrthoDB" id="871140at2"/>
<dbReference type="UniPathway" id="UPA00664"/>
<dbReference type="Proteomes" id="UP000002718">
    <property type="component" value="Chromosome"/>
</dbReference>
<dbReference type="GO" id="GO:0005886">
    <property type="term" value="C:plasma membrane"/>
    <property type="evidence" value="ECO:0007669"/>
    <property type="project" value="UniProtKB-SubCell"/>
</dbReference>
<dbReference type="GO" id="GO:0008961">
    <property type="term" value="F:phosphatidylglycerol-prolipoprotein diacylglyceryl transferase activity"/>
    <property type="evidence" value="ECO:0007669"/>
    <property type="project" value="UniProtKB-UniRule"/>
</dbReference>
<dbReference type="GO" id="GO:0042158">
    <property type="term" value="P:lipoprotein biosynthetic process"/>
    <property type="evidence" value="ECO:0007669"/>
    <property type="project" value="UniProtKB-UniRule"/>
</dbReference>
<dbReference type="HAMAP" id="MF_01147">
    <property type="entry name" value="Lgt"/>
    <property type="match status" value="1"/>
</dbReference>
<dbReference type="InterPro" id="IPR001640">
    <property type="entry name" value="Lgt"/>
</dbReference>
<dbReference type="NCBIfam" id="TIGR00544">
    <property type="entry name" value="lgt"/>
    <property type="match status" value="1"/>
</dbReference>
<dbReference type="PANTHER" id="PTHR30589:SF0">
    <property type="entry name" value="PHOSPHATIDYLGLYCEROL--PROLIPOPROTEIN DIACYLGLYCERYL TRANSFERASE"/>
    <property type="match status" value="1"/>
</dbReference>
<dbReference type="PANTHER" id="PTHR30589">
    <property type="entry name" value="PROLIPOPROTEIN DIACYLGLYCERYL TRANSFERASE"/>
    <property type="match status" value="1"/>
</dbReference>
<dbReference type="Pfam" id="PF01790">
    <property type="entry name" value="LGT"/>
    <property type="match status" value="1"/>
</dbReference>
<dbReference type="PROSITE" id="PS01311">
    <property type="entry name" value="LGT"/>
    <property type="match status" value="1"/>
</dbReference>
<evidence type="ECO:0000255" key="1">
    <source>
        <dbReference type="HAMAP-Rule" id="MF_01147"/>
    </source>
</evidence>
<feature type="chain" id="PRO_1000053460" description="Phosphatidylglycerol--prolipoprotein diacylglyceryl transferase">
    <location>
        <begin position="1"/>
        <end position="289"/>
    </location>
</feature>
<feature type="transmembrane region" description="Helical" evidence="1">
    <location>
        <begin position="17"/>
        <end position="37"/>
    </location>
</feature>
<feature type="transmembrane region" description="Helical" evidence="1">
    <location>
        <begin position="57"/>
        <end position="77"/>
    </location>
</feature>
<feature type="transmembrane region" description="Helical" evidence="1">
    <location>
        <begin position="89"/>
        <end position="109"/>
    </location>
</feature>
<feature type="transmembrane region" description="Helical" evidence="1">
    <location>
        <begin position="121"/>
        <end position="141"/>
    </location>
</feature>
<feature type="transmembrane region" description="Helical" evidence="1">
    <location>
        <begin position="174"/>
        <end position="194"/>
    </location>
</feature>
<feature type="transmembrane region" description="Helical" evidence="1">
    <location>
        <begin position="200"/>
        <end position="220"/>
    </location>
</feature>
<feature type="transmembrane region" description="Helical" evidence="1">
    <location>
        <begin position="235"/>
        <end position="255"/>
    </location>
</feature>
<feature type="binding site" evidence="1">
    <location>
        <position position="140"/>
    </location>
    <ligand>
        <name>a 1,2-diacyl-sn-glycero-3-phospho-(1'-sn-glycerol)</name>
        <dbReference type="ChEBI" id="CHEBI:64716"/>
    </ligand>
</feature>
<proteinExistence type="inferred from homology"/>
<keyword id="KW-0997">Cell inner membrane</keyword>
<keyword id="KW-1003">Cell membrane</keyword>
<keyword id="KW-0472">Membrane</keyword>
<keyword id="KW-1185">Reference proteome</keyword>
<keyword id="KW-0808">Transferase</keyword>
<keyword id="KW-0812">Transmembrane</keyword>
<keyword id="KW-1133">Transmembrane helix</keyword>
<accession>Q2YC65</accession>